<keyword id="KW-0125">Carotenoid biosynthesis</keyword>
<keyword id="KW-0150">Chloroplast</keyword>
<keyword id="KW-0957">Chromoplast</keyword>
<keyword id="KW-0274">FAD</keyword>
<keyword id="KW-0285">Flavoprotein</keyword>
<keyword id="KW-0472">Membrane</keyword>
<keyword id="KW-0560">Oxidoreductase</keyword>
<keyword id="KW-0934">Plastid</keyword>
<keyword id="KW-1185">Reference proteome</keyword>
<keyword id="KW-0809">Transit peptide</keyword>
<proteinExistence type="inferred from homology"/>
<gene>
    <name type="primary">PDS</name>
    <name type="synonym">PDS1</name>
    <name type="ordered locus">Os03g0184000</name>
    <name type="ordered locus">LOC_Os03g08570</name>
    <name type="ORF">OSJNBa0032G08.5</name>
</gene>
<name>PDS_ORYSJ</name>
<sequence>MDTGCLSSMNITGTSQARSFAGQLPTHRCFASSSIQALKSSQHVSFGVKSLVLRNKGKRFRRRLGALQVVCQDFPRPPLENTINFLEAGQLSSFFRNSEQPTKPLQVVIAGAGLAGLSTAKYLADAGHKPILLEARDVLGGKIAAWKDEDGDWYETGLHIFFGAYPNIQNLFGELGINDRLQWKEHSMIFAMPNKPGEFSRFDFPETLPAPLNGIWAILRNNEMLTWPEKVKFALGLLPAMVGGQAYVEAQDGFTVSEWMKKQGVPDRVNDEVFIAMSKALNFINPDELSMQCILIALNRFLQEKHGSKMAFLDGNPPERLCMPIVDHVRSLGGEVRLNSRIQKIELNPDGTVKHFALTDGTQITGDAYVFATPVDILKLLVPQEWKEISYFKKLEKLVGVPVINVHIWFDRKLKNTYDHLLFSRSSLLSVYADMSVTCKEYYDPNRSMLELVFAPAEEWVGRSDTEIIEATMQELAKLFPDEIAADQSKAKILKYHVVKTPRSVYKTIPDCEPCRPLQRSPIEGFYLAGDYTKQKYLASMEGAVLSGKLCAQSVVEDYKMLSRRSLKSLQSEVPVAS</sequence>
<accession>Q0DUI8</accession>
<accession>A0A0P0VTZ9</accession>
<accession>Q10QT5</accession>
<accession>Q93Y74</accession>
<accession>Q9ZTN9</accession>
<protein>
    <recommendedName>
        <fullName evidence="4">15-cis-phytoene desaturase, chloroplastic/chromoplastic</fullName>
        <ecNumber evidence="1">1.3.5.5</ecNumber>
    </recommendedName>
    <alternativeName>
        <fullName evidence="4">Phytoene dehydrogenase</fullName>
    </alternativeName>
    <alternativeName>
        <fullName evidence="4">Phytoene desaturase</fullName>
    </alternativeName>
</protein>
<reference key="1">
    <citation type="journal article" date="2005" name="Genome Res.">
        <title>Sequence, annotation, and analysis of synteny between rice chromosome 3 and diverged grass species.</title>
        <authorList>
            <consortium name="The rice chromosome 3 sequencing consortium"/>
            <person name="Buell C.R."/>
            <person name="Yuan Q."/>
            <person name="Ouyang S."/>
            <person name="Liu J."/>
            <person name="Zhu W."/>
            <person name="Wang A."/>
            <person name="Maiti R."/>
            <person name="Haas B."/>
            <person name="Wortman J."/>
            <person name="Pertea M."/>
            <person name="Jones K.M."/>
            <person name="Kim M."/>
            <person name="Overton L."/>
            <person name="Tsitrin T."/>
            <person name="Fadrosh D."/>
            <person name="Bera J."/>
            <person name="Weaver B."/>
            <person name="Jin S."/>
            <person name="Johri S."/>
            <person name="Reardon M."/>
            <person name="Webb K."/>
            <person name="Hill J."/>
            <person name="Moffat K."/>
            <person name="Tallon L."/>
            <person name="Van Aken S."/>
            <person name="Lewis M."/>
            <person name="Utterback T."/>
            <person name="Feldblyum T."/>
            <person name="Zismann V."/>
            <person name="Iobst S."/>
            <person name="Hsiao J."/>
            <person name="de Vazeille A.R."/>
            <person name="Salzberg S.L."/>
            <person name="White O."/>
            <person name="Fraser C.M."/>
            <person name="Yu Y."/>
            <person name="Kim H."/>
            <person name="Rambo T."/>
            <person name="Currie J."/>
            <person name="Collura K."/>
            <person name="Kernodle-Thompson S."/>
            <person name="Wei F."/>
            <person name="Kudrna K."/>
            <person name="Ammiraju J.S.S."/>
            <person name="Luo M."/>
            <person name="Goicoechea J.L."/>
            <person name="Wing R.A."/>
            <person name="Henry D."/>
            <person name="Oates R."/>
            <person name="Palmer M."/>
            <person name="Pries G."/>
            <person name="Saski C."/>
            <person name="Simmons J."/>
            <person name="Soderlund C."/>
            <person name="Nelson W."/>
            <person name="de la Bastide M."/>
            <person name="Spiegel L."/>
            <person name="Nascimento L."/>
            <person name="Huang E."/>
            <person name="Preston R."/>
            <person name="Zutavern T."/>
            <person name="Palmer L."/>
            <person name="O'Shaughnessy A."/>
            <person name="Dike S."/>
            <person name="McCombie W.R."/>
            <person name="Minx P."/>
            <person name="Cordum H."/>
            <person name="Wilson R."/>
            <person name="Jin W."/>
            <person name="Lee H.R."/>
            <person name="Jiang J."/>
            <person name="Jackson S."/>
        </authorList>
    </citation>
    <scope>NUCLEOTIDE SEQUENCE [LARGE SCALE GENOMIC DNA]</scope>
    <source>
        <strain>cv. Nipponbare</strain>
    </source>
</reference>
<reference key="2">
    <citation type="journal article" date="2005" name="Nature">
        <title>The map-based sequence of the rice genome.</title>
        <authorList>
            <consortium name="International rice genome sequencing project (IRGSP)"/>
        </authorList>
    </citation>
    <scope>NUCLEOTIDE SEQUENCE [LARGE SCALE GENOMIC DNA]</scope>
    <source>
        <strain>cv. Nipponbare</strain>
    </source>
</reference>
<reference key="3">
    <citation type="journal article" date="2008" name="Nucleic Acids Res.">
        <title>The rice annotation project database (RAP-DB): 2008 update.</title>
        <authorList>
            <consortium name="The rice annotation project (RAP)"/>
        </authorList>
    </citation>
    <scope>GENOME REANNOTATION</scope>
    <source>
        <strain>cv. Nipponbare</strain>
    </source>
</reference>
<reference key="4">
    <citation type="journal article" date="2013" name="Rice">
        <title>Improvement of the Oryza sativa Nipponbare reference genome using next generation sequence and optical map data.</title>
        <authorList>
            <person name="Kawahara Y."/>
            <person name="de la Bastide M."/>
            <person name="Hamilton J.P."/>
            <person name="Kanamori H."/>
            <person name="McCombie W.R."/>
            <person name="Ouyang S."/>
            <person name="Schwartz D.C."/>
            <person name="Tanaka T."/>
            <person name="Wu J."/>
            <person name="Zhou S."/>
            <person name="Childs K.L."/>
            <person name="Davidson R.M."/>
            <person name="Lin H."/>
            <person name="Quesada-Ocampo L."/>
            <person name="Vaillancourt B."/>
            <person name="Sakai H."/>
            <person name="Lee S.S."/>
            <person name="Kim J."/>
            <person name="Numa H."/>
            <person name="Itoh T."/>
            <person name="Buell C.R."/>
            <person name="Matsumoto T."/>
        </authorList>
    </citation>
    <scope>GENOME REANNOTATION</scope>
    <source>
        <strain>cv. Nipponbare</strain>
    </source>
</reference>
<organism>
    <name type="scientific">Oryza sativa subsp. japonica</name>
    <name type="common">Rice</name>
    <dbReference type="NCBI Taxonomy" id="39947"/>
    <lineage>
        <taxon>Eukaryota</taxon>
        <taxon>Viridiplantae</taxon>
        <taxon>Streptophyta</taxon>
        <taxon>Embryophyta</taxon>
        <taxon>Tracheophyta</taxon>
        <taxon>Spermatophyta</taxon>
        <taxon>Magnoliopsida</taxon>
        <taxon>Liliopsida</taxon>
        <taxon>Poales</taxon>
        <taxon>Poaceae</taxon>
        <taxon>BOP clade</taxon>
        <taxon>Oryzoideae</taxon>
        <taxon>Oryzeae</taxon>
        <taxon>Oryzinae</taxon>
        <taxon>Oryza</taxon>
        <taxon>Oryza sativa</taxon>
    </lineage>
</organism>
<evidence type="ECO:0000250" key="1">
    <source>
        <dbReference type="UniProtKB" id="A2XDA1"/>
    </source>
</evidence>
<evidence type="ECO:0000250" key="2">
    <source>
        <dbReference type="UniProtKB" id="Q40406"/>
    </source>
</evidence>
<evidence type="ECO:0000255" key="3"/>
<evidence type="ECO:0000305" key="4"/>
<comment type="function">
    <text evidence="1">Converts phytoene into zeta-carotene via the intermediary of phytofluene by the symmetrical introduction of two double bonds at the C-11 and C-11' positions of phytoene with a concomitant isomerization of two neighboring double bonds at the C9 and C9' positions from trans to cis.</text>
</comment>
<comment type="catalytic activity">
    <reaction evidence="1">
        <text>2 a plastoquinone + 15-cis-phytoene = 9,9',15-tri-cis-zeta-carotene + 2 a plastoquinol</text>
        <dbReference type="Rhea" id="RHEA:30287"/>
        <dbReference type="Rhea" id="RHEA-COMP:9561"/>
        <dbReference type="Rhea" id="RHEA-COMP:9562"/>
        <dbReference type="ChEBI" id="CHEBI:17757"/>
        <dbReference type="ChEBI" id="CHEBI:27787"/>
        <dbReference type="ChEBI" id="CHEBI:48717"/>
        <dbReference type="ChEBI" id="CHEBI:62192"/>
        <dbReference type="EC" id="1.3.5.5"/>
    </reaction>
</comment>
<comment type="cofactor">
    <cofactor evidence="1">
        <name>FAD</name>
        <dbReference type="ChEBI" id="CHEBI:57692"/>
    </cofactor>
</comment>
<comment type="activity regulation">
    <text evidence="1">Inhibited by the herbicide norflurazon (NFZ).</text>
</comment>
<comment type="pathway">
    <text>Carotenoid biosynthesis; lycopene biosynthesis.</text>
</comment>
<comment type="subunit">
    <text evidence="1">Homotetramer. Homotetramer is the active form of the enzyme.</text>
</comment>
<comment type="subcellular location">
    <subcellularLocation>
        <location evidence="2">Plastid</location>
        <location evidence="2">Chloroplast</location>
    </subcellularLocation>
    <subcellularLocation>
        <location evidence="2">Plastid</location>
        <location evidence="2">Chromoplast</location>
    </subcellularLocation>
    <subcellularLocation>
        <location evidence="1">Membrane</location>
        <topology evidence="1">Peripheral membrane protein</topology>
    </subcellularLocation>
</comment>
<comment type="similarity">
    <text evidence="4">Belongs to the carotenoid/retinoid oxidoreductase family.</text>
</comment>
<comment type="sequence caution" evidence="4">
    <conflict type="erroneous initiation">
        <sequence resource="EMBL-CDS" id="BAF11100"/>
    </conflict>
</comment>
<feature type="transit peptide" description="Chloroplast and chromoplast" evidence="3">
    <location>
        <begin position="1"/>
        <end position="87"/>
    </location>
</feature>
<feature type="chain" id="PRO_0000006327" description="15-cis-phytoene desaturase, chloroplastic/chromoplastic">
    <location>
        <begin position="88"/>
        <end position="578"/>
    </location>
</feature>
<feature type="binding site" evidence="1">
    <location>
        <position position="115"/>
    </location>
    <ligand>
        <name>FAD</name>
        <dbReference type="ChEBI" id="CHEBI:57692"/>
    </ligand>
</feature>
<feature type="binding site" evidence="1">
    <location>
        <begin position="134"/>
        <end position="135"/>
    </location>
    <ligand>
        <name>FAD</name>
        <dbReference type="ChEBI" id="CHEBI:57692"/>
    </ligand>
</feature>
<feature type="binding site" evidence="1">
    <location>
        <position position="142"/>
    </location>
    <ligand>
        <name>FAD</name>
        <dbReference type="ChEBI" id="CHEBI:57692"/>
    </ligand>
</feature>
<feature type="binding site" evidence="1">
    <location>
        <begin position="159"/>
        <end position="160"/>
    </location>
    <ligand>
        <name>FAD</name>
        <dbReference type="ChEBI" id="CHEBI:57692"/>
    </ligand>
</feature>
<feature type="binding site" evidence="1">
    <location>
        <position position="165"/>
    </location>
    <ligand>
        <name>FAD</name>
        <dbReference type="ChEBI" id="CHEBI:57692"/>
    </ligand>
</feature>
<feature type="binding site" evidence="1">
    <location>
        <position position="300"/>
    </location>
    <ligand>
        <name>substrate</name>
    </ligand>
</feature>
<feature type="binding site" evidence="1">
    <location>
        <position position="342"/>
    </location>
    <ligand>
        <name>FAD</name>
        <dbReference type="ChEBI" id="CHEBI:57692"/>
    </ligand>
</feature>
<feature type="binding site" evidence="1">
    <location>
        <position position="531"/>
    </location>
    <ligand>
        <name>FAD</name>
        <dbReference type="ChEBI" id="CHEBI:57692"/>
    </ligand>
</feature>
<feature type="binding site" evidence="1">
    <location>
        <position position="539"/>
    </location>
    <ligand>
        <name>substrate</name>
    </ligand>
</feature>
<feature type="binding site" evidence="1">
    <location>
        <position position="541"/>
    </location>
    <ligand>
        <name>FAD</name>
        <dbReference type="ChEBI" id="CHEBI:57692"/>
    </ligand>
</feature>
<dbReference type="EC" id="1.3.5.5" evidence="1"/>
<dbReference type="EMBL" id="AC079633">
    <property type="protein sequence ID" value="AAK92625.1"/>
    <property type="molecule type" value="Genomic_DNA"/>
</dbReference>
<dbReference type="EMBL" id="DP000009">
    <property type="protein sequence ID" value="ABF94340.1"/>
    <property type="molecule type" value="Genomic_DNA"/>
</dbReference>
<dbReference type="EMBL" id="AP008209">
    <property type="protein sequence ID" value="BAF11100.1"/>
    <property type="status" value="ALT_INIT"/>
    <property type="molecule type" value="Genomic_DNA"/>
</dbReference>
<dbReference type="EMBL" id="AP014959">
    <property type="protein sequence ID" value="BAS82656.1"/>
    <property type="molecule type" value="Genomic_DNA"/>
</dbReference>
<dbReference type="RefSeq" id="XP_015633101.1">
    <property type="nucleotide sequence ID" value="XM_015777615.1"/>
</dbReference>
<dbReference type="SMR" id="Q0DUI8"/>
<dbReference type="FunCoup" id="Q0DUI8">
    <property type="interactions" value="914"/>
</dbReference>
<dbReference type="STRING" id="39947.Q0DUI8"/>
<dbReference type="PaxDb" id="39947-Q0DUI8"/>
<dbReference type="EnsemblPlants" id="Os03t0184000-01">
    <property type="protein sequence ID" value="Os03t0184000-01"/>
    <property type="gene ID" value="Os03g0184000"/>
</dbReference>
<dbReference type="GeneID" id="4331854"/>
<dbReference type="Gramene" id="Os03t0184000-01">
    <property type="protein sequence ID" value="Os03t0184000-01"/>
    <property type="gene ID" value="Os03g0184000"/>
</dbReference>
<dbReference type="KEGG" id="dosa:Os03g0184000"/>
<dbReference type="KEGG" id="osa:4331854"/>
<dbReference type="eggNOG" id="KOG0029">
    <property type="taxonomic scope" value="Eukaryota"/>
</dbReference>
<dbReference type="HOGENOM" id="CLU_022687_1_0_1"/>
<dbReference type="InParanoid" id="Q0DUI8"/>
<dbReference type="OMA" id="HSMIFNQ"/>
<dbReference type="OrthoDB" id="5046242at2759"/>
<dbReference type="UniPathway" id="UPA00803"/>
<dbReference type="Proteomes" id="UP000000763">
    <property type="component" value="Chromosome 3"/>
</dbReference>
<dbReference type="Proteomes" id="UP000059680">
    <property type="component" value="Chromosome 3"/>
</dbReference>
<dbReference type="GO" id="GO:0009507">
    <property type="term" value="C:chloroplast"/>
    <property type="evidence" value="ECO:0000250"/>
    <property type="project" value="UniProtKB"/>
</dbReference>
<dbReference type="GO" id="GO:0009509">
    <property type="term" value="C:chromoplast"/>
    <property type="evidence" value="ECO:0000250"/>
    <property type="project" value="UniProtKB"/>
</dbReference>
<dbReference type="GO" id="GO:0016020">
    <property type="term" value="C:membrane"/>
    <property type="evidence" value="ECO:0007669"/>
    <property type="project" value="UniProtKB-SubCell"/>
</dbReference>
<dbReference type="GO" id="GO:0071949">
    <property type="term" value="F:FAD binding"/>
    <property type="evidence" value="ECO:0000250"/>
    <property type="project" value="UniProtKB"/>
</dbReference>
<dbReference type="GO" id="GO:0016166">
    <property type="term" value="F:phytoene dehydrogenase activity"/>
    <property type="evidence" value="ECO:0000250"/>
    <property type="project" value="UniProtKB"/>
</dbReference>
<dbReference type="GO" id="GO:0016120">
    <property type="term" value="P:carotene biosynthetic process"/>
    <property type="evidence" value="ECO:0000250"/>
    <property type="project" value="UniProtKB"/>
</dbReference>
<dbReference type="GO" id="GO:0016117">
    <property type="term" value="P:carotenoid biosynthetic process"/>
    <property type="evidence" value="ECO:0000318"/>
    <property type="project" value="GO_Central"/>
</dbReference>
<dbReference type="GO" id="GO:0051289">
    <property type="term" value="P:protein homotetramerization"/>
    <property type="evidence" value="ECO:0000250"/>
    <property type="project" value="UniProtKB"/>
</dbReference>
<dbReference type="FunFam" id="3.50.50.60:FF:000091">
    <property type="entry name" value="15-cis-phytoene desaturase, chloroplastic/chromoplastic"/>
    <property type="match status" value="1"/>
</dbReference>
<dbReference type="Gene3D" id="3.50.50.60">
    <property type="entry name" value="FAD/NAD(P)-binding domain"/>
    <property type="match status" value="1"/>
</dbReference>
<dbReference type="InterPro" id="IPR002937">
    <property type="entry name" value="Amino_oxidase"/>
</dbReference>
<dbReference type="InterPro" id="IPR036188">
    <property type="entry name" value="FAD/NAD-bd_sf"/>
</dbReference>
<dbReference type="InterPro" id="IPR014102">
    <property type="entry name" value="Phytoene_desaturase"/>
</dbReference>
<dbReference type="InterPro" id="IPR050464">
    <property type="entry name" value="Zeta_carotene_desat/Oxidored"/>
</dbReference>
<dbReference type="NCBIfam" id="TIGR02731">
    <property type="entry name" value="phytoene_desat"/>
    <property type="match status" value="1"/>
</dbReference>
<dbReference type="PANTHER" id="PTHR42923:SF45">
    <property type="entry name" value="15-CIS-PHYTOENE DESATURASE, CHLOROPLASTIC_CHROMOPLASTIC"/>
    <property type="match status" value="1"/>
</dbReference>
<dbReference type="PANTHER" id="PTHR42923">
    <property type="entry name" value="PROTOPORPHYRINOGEN OXIDASE"/>
    <property type="match status" value="1"/>
</dbReference>
<dbReference type="Pfam" id="PF01593">
    <property type="entry name" value="Amino_oxidase"/>
    <property type="match status" value="1"/>
</dbReference>
<dbReference type="SUPFAM" id="SSF51905">
    <property type="entry name" value="FAD/NAD(P)-binding domain"/>
    <property type="match status" value="1"/>
</dbReference>